<organism>
    <name type="scientific">Salmonella typhimurium (strain LT2 / SGSC1412 / ATCC 700720)</name>
    <dbReference type="NCBI Taxonomy" id="99287"/>
    <lineage>
        <taxon>Bacteria</taxon>
        <taxon>Pseudomonadati</taxon>
        <taxon>Pseudomonadota</taxon>
        <taxon>Gammaproteobacteria</taxon>
        <taxon>Enterobacterales</taxon>
        <taxon>Enterobacteriaceae</taxon>
        <taxon>Salmonella</taxon>
    </lineage>
</organism>
<evidence type="ECO:0000250" key="1">
    <source>
        <dbReference type="UniProtKB" id="A0A0H2VCA1"/>
    </source>
</evidence>
<evidence type="ECO:0000250" key="2">
    <source>
        <dbReference type="UniProtKB" id="A1JUB7"/>
    </source>
</evidence>
<evidence type="ECO:0000269" key="3">
    <source>
    </source>
</evidence>
<evidence type="ECO:0000269" key="4">
    <source>
    </source>
</evidence>
<evidence type="ECO:0000269" key="5">
    <source>
    </source>
</evidence>
<evidence type="ECO:0000303" key="6">
    <source>
    </source>
</evidence>
<evidence type="ECO:0000305" key="7"/>
<evidence type="ECO:0000312" key="8">
    <source>
        <dbReference type="EMBL" id="AAL22550.1"/>
    </source>
</evidence>
<evidence type="ECO:0007744" key="9">
    <source>
        <dbReference type="PDB" id="2WPQ"/>
    </source>
</evidence>
<evidence type="ECO:0007744" key="10">
    <source>
        <dbReference type="PDB" id="2WPR"/>
    </source>
</evidence>
<evidence type="ECO:0007744" key="11">
    <source>
        <dbReference type="PDB" id="2WPS"/>
    </source>
</evidence>
<evidence type="ECO:0007744" key="12">
    <source>
        <dbReference type="PDB" id="2YNY"/>
    </source>
</evidence>
<evidence type="ECO:0007744" key="13">
    <source>
        <dbReference type="PDB" id="2YNZ"/>
    </source>
</evidence>
<evidence type="ECO:0007744" key="14">
    <source>
        <dbReference type="PDB" id="2YO0"/>
    </source>
</evidence>
<evidence type="ECO:0007744" key="15">
    <source>
        <dbReference type="PDB" id="2YO1"/>
    </source>
</evidence>
<evidence type="ECO:0007744" key="16">
    <source>
        <dbReference type="PDB" id="2YO2"/>
    </source>
</evidence>
<evidence type="ECO:0007744" key="17">
    <source>
        <dbReference type="PDB" id="2YO3"/>
    </source>
</evidence>
<evidence type="ECO:0007744" key="18">
    <source>
        <dbReference type="PDB" id="3ZMF"/>
    </source>
</evidence>
<evidence type="ECO:0007829" key="19">
    <source>
        <dbReference type="PDB" id="2WPQ"/>
    </source>
</evidence>
<evidence type="ECO:0007829" key="20">
    <source>
        <dbReference type="PDB" id="2YNY"/>
    </source>
</evidence>
<evidence type="ECO:0007829" key="21">
    <source>
        <dbReference type="PDB" id="2YNZ"/>
    </source>
</evidence>
<evidence type="ECO:0007829" key="22">
    <source>
        <dbReference type="PDB" id="2YO0"/>
    </source>
</evidence>
<evidence type="ECO:0007829" key="23">
    <source>
        <dbReference type="PDB" id="2YO1"/>
    </source>
</evidence>
<evidence type="ECO:0007829" key="24">
    <source>
        <dbReference type="PDB" id="2YO2"/>
    </source>
</evidence>
<evidence type="ECO:0007829" key="25">
    <source>
        <dbReference type="PDB" id="2YO3"/>
    </source>
</evidence>
<evidence type="ECO:0007829" key="26">
    <source>
        <dbReference type="PDB" id="3ZMF"/>
    </source>
</evidence>
<keyword id="KW-0002">3D-structure</keyword>
<keyword id="KW-0998">Cell outer membrane</keyword>
<keyword id="KW-0472">Membrane</keyword>
<keyword id="KW-0653">Protein transport</keyword>
<keyword id="KW-1185">Reference proteome</keyword>
<keyword id="KW-0732">Signal</keyword>
<keyword id="KW-0812">Transmembrane</keyword>
<keyword id="KW-1134">Transmembrane beta strand</keyword>
<keyword id="KW-0813">Transport</keyword>
<gene>
    <name evidence="6" type="primary">sadA</name>
    <name evidence="8" type="ordered locus">STM3691</name>
</gene>
<dbReference type="EMBL" id="AE006468">
    <property type="protein sequence ID" value="AAL22550.1"/>
    <property type="molecule type" value="Genomic_DNA"/>
</dbReference>
<dbReference type="RefSeq" id="NP_462591.1">
    <property type="nucleotide sequence ID" value="NC_003197.2"/>
</dbReference>
<dbReference type="RefSeq" id="WP_001079584.1">
    <property type="nucleotide sequence ID" value="NC_003197.2"/>
</dbReference>
<dbReference type="PDB" id="2WPQ">
    <property type="method" value="X-ray"/>
    <property type="resolution" value="1.85 A"/>
    <property type="chains" value="A/B/C=479-519"/>
</dbReference>
<dbReference type="PDB" id="2WPR">
    <property type="method" value="X-ray"/>
    <property type="resolution" value="2.65 A"/>
    <property type="chains" value="A/B/C=483-523"/>
</dbReference>
<dbReference type="PDB" id="2WPS">
    <property type="method" value="X-ray"/>
    <property type="resolution" value="2.60 A"/>
    <property type="chains" value="A/B/C=483-523"/>
</dbReference>
<dbReference type="PDB" id="2YNY">
    <property type="method" value="X-ray"/>
    <property type="resolution" value="1.35 A"/>
    <property type="chains" value="A/B/C=253-302"/>
</dbReference>
<dbReference type="PDB" id="2YNZ">
    <property type="method" value="X-ray"/>
    <property type="resolution" value="1.40 A"/>
    <property type="chains" value="A/B/C=823-947"/>
</dbReference>
<dbReference type="PDB" id="2YO0">
    <property type="method" value="X-ray"/>
    <property type="resolution" value="2.80 A"/>
    <property type="chains" value="A=1049-1304"/>
</dbReference>
<dbReference type="PDB" id="2YO1">
    <property type="method" value="X-ray"/>
    <property type="resolution" value="3.10 A"/>
    <property type="chains" value="A/B/C=1061-1304"/>
</dbReference>
<dbReference type="PDB" id="2YO2">
    <property type="method" value="X-ray"/>
    <property type="resolution" value="2.00 A"/>
    <property type="chains" value="A=253-358"/>
</dbReference>
<dbReference type="PDB" id="2YO3">
    <property type="method" value="X-ray"/>
    <property type="resolution" value="2.00 A"/>
    <property type="chains" value="A/B/C=1185-1386"/>
</dbReference>
<dbReference type="PDB" id="3ZMF">
    <property type="method" value="X-ray"/>
    <property type="resolution" value="1.85 A"/>
    <property type="chains" value="A/B/C=304-358"/>
</dbReference>
<dbReference type="PDBsum" id="2WPQ"/>
<dbReference type="PDBsum" id="2WPR"/>
<dbReference type="PDBsum" id="2WPS"/>
<dbReference type="PDBsum" id="2YNY"/>
<dbReference type="PDBsum" id="2YNZ"/>
<dbReference type="PDBsum" id="2YO0"/>
<dbReference type="PDBsum" id="2YO1"/>
<dbReference type="PDBsum" id="2YO2"/>
<dbReference type="PDBsum" id="2YO3"/>
<dbReference type="PDBsum" id="3ZMF"/>
<dbReference type="SMR" id="Q8ZL64"/>
<dbReference type="STRING" id="99287.STM3691"/>
<dbReference type="PaxDb" id="99287-STM3691"/>
<dbReference type="GeneID" id="1255215"/>
<dbReference type="KEGG" id="stm:STM3691"/>
<dbReference type="PATRIC" id="fig|99287.12.peg.3904"/>
<dbReference type="HOGENOM" id="CLU_002363_1_0_6"/>
<dbReference type="OMA" id="WYNHDVA"/>
<dbReference type="PhylomeDB" id="Q8ZL64"/>
<dbReference type="BioCyc" id="SENT99287:STM3691-MONOMER"/>
<dbReference type="EvolutionaryTrace" id="Q8ZL64"/>
<dbReference type="Proteomes" id="UP000001014">
    <property type="component" value="Chromosome"/>
</dbReference>
<dbReference type="GO" id="GO:0009279">
    <property type="term" value="C:cell outer membrane"/>
    <property type="evidence" value="ECO:0007669"/>
    <property type="project" value="UniProtKB-SubCell"/>
</dbReference>
<dbReference type="GO" id="GO:0009986">
    <property type="term" value="C:cell surface"/>
    <property type="evidence" value="ECO:0007669"/>
    <property type="project" value="UniProtKB-SubCell"/>
</dbReference>
<dbReference type="GO" id="GO:0015031">
    <property type="term" value="P:protein transport"/>
    <property type="evidence" value="ECO:0007669"/>
    <property type="project" value="UniProtKB-KW"/>
</dbReference>
<dbReference type="CDD" id="cd12820">
    <property type="entry name" value="LbR_YadA-like"/>
    <property type="match status" value="1"/>
</dbReference>
<dbReference type="Gene3D" id="1.20.5.170">
    <property type="match status" value="9"/>
</dbReference>
<dbReference type="Gene3D" id="1.20.5.2280">
    <property type="match status" value="1"/>
</dbReference>
<dbReference type="Gene3D" id="2.60.40.4050">
    <property type="match status" value="3"/>
</dbReference>
<dbReference type="Gene3D" id="4.10.80.270">
    <property type="match status" value="7"/>
</dbReference>
<dbReference type="Gene3D" id="6.10.250.2040">
    <property type="match status" value="1"/>
</dbReference>
<dbReference type="Gene3D" id="3.30.1300.30">
    <property type="entry name" value="GSPII I/J protein-like"/>
    <property type="match status" value="1"/>
</dbReference>
<dbReference type="Gene3D" id="2.150.10.10">
    <property type="entry name" value="Serralysin-like metalloprotease, C-terminal"/>
    <property type="match status" value="3"/>
</dbReference>
<dbReference type="InterPro" id="IPR008640">
    <property type="entry name" value="Adhesin_Head_dom"/>
</dbReference>
<dbReference type="InterPro" id="IPR008635">
    <property type="entry name" value="Coiled_stalk_dom"/>
</dbReference>
<dbReference type="InterPro" id="IPR024973">
    <property type="entry name" value="ESPR"/>
</dbReference>
<dbReference type="InterPro" id="IPR045584">
    <property type="entry name" value="Pilin-like"/>
</dbReference>
<dbReference type="InterPro" id="IPR011049">
    <property type="entry name" value="Serralysin-like_metalloprot_C"/>
</dbReference>
<dbReference type="InterPro" id="IPR005594">
    <property type="entry name" value="YadA_C"/>
</dbReference>
<dbReference type="Pfam" id="PF13018">
    <property type="entry name" value="ESPR"/>
    <property type="match status" value="1"/>
</dbReference>
<dbReference type="Pfam" id="PF03895">
    <property type="entry name" value="YadA_anchor"/>
    <property type="match status" value="1"/>
</dbReference>
<dbReference type="Pfam" id="PF05658">
    <property type="entry name" value="YadA_head"/>
    <property type="match status" value="9"/>
</dbReference>
<dbReference type="Pfam" id="PF05662">
    <property type="entry name" value="YadA_stalk"/>
    <property type="match status" value="12"/>
</dbReference>
<dbReference type="SUPFAM" id="SSF101967">
    <property type="entry name" value="Adhesin YadA, collagen-binding domain"/>
    <property type="match status" value="11"/>
</dbReference>
<dbReference type="SUPFAM" id="SSF54523">
    <property type="entry name" value="Pili subunits"/>
    <property type="match status" value="1"/>
</dbReference>
<sequence length="1461" mass="147838">MNRIFKVLWNAATGTFVVTSETAKSRGKKNGRRKLAVSALIGLSSIMVSADALANAGNDTGDGVTPTGTQTGGKGWIAIGTDATANTYTNVDGASAAMGYKASAMGKWSTAIGSYSQSTGDSSLALGVKSVSAGDRAIAMGASSSASGSYSMAMGVYANSSGAKSVALGYKSVASGATSSALGYQATASGDDSAAFGNGAKAIGTNSVALGSGSVAQEDNSVAVGNSTTQRQITYVAKGDINSTSTDAVTGAQIYSLSQSVADRLGGGASVNSDGTVNAPLYEVGTGIYNNVGSALSALNTSITNTEASVAGLAEDALLWDESISAFSASHTGNASKITNLAAGTLAADSTDAVNGSQLFDTNEKVDKNTADIATNTGSINQNTADITANTDSINQNTTDIAANTTSINQNTTDIATNTTNINSLSDSVTTLTDDALLWDAASGAFSAKHNGSDSKITNLAAGTLAADSTDAVNGSQLFDTNEKVDQNTADITTNTNSINQNTTDIATNTTNINNLSDSITTLTDDALLWDAASGAFSANHNGSASKITNLAAGTLAADSTDAVNGSQLFATNENVSQNTADITTNTNSINQNTTDIATNTTSINNLSDSITTLTDDALLWDAASGTFSASRSGSASKITNLAAGTLAADSTDAVNGSQLYETNQKVDQNTSAIADINTSITNLSSDNLSWNETTSSFSASHGSSTTNKITNVAAGELSEESTDAVNGSQLFETNEKVDQNTTDIAANTTNITQNSTAIENLNTSVSDINTSITGLTDNALLWDEDTGAFSANHGGSTSKITNVAAGALSEDSTDAVNGSQLYETNQKVDQNTSAIADINTSITNLGTDALSWDDEEGAFSASHGTSGTNKITNVAAGEIASDSTDAVNGSQLYETNMLISQYNESISQLAGDTSETYITENGTGVKYIRTNDNGLEGQDAYATGNGATAVGYDAVASGAGSLALGQNSSSSIEGSIALGSGSTSNRAITTGIRETSATSDGVVIGYNTTDRELLGALSLGTDGESYRQITNVADGSEAQDAVTVRQLQNAIGAVTTTPTKYYHANSTEEDSLAVGTDSLAMGAKTIVNADAGIGIGLNTLVMADAINGIAIGSNARANHANSIAMGNGSQTTRGAQTDYTAYNMDTPQNSVGEFSVGSEDGQRQITNVAAGSADTDAVNVGQLKVTDAQVSRNTQSITNLNTQVSNLDTRVTNIENGIGDIVTTGSTKYFKTNTDGADANAQGADSVAIGSGSIAAAENSVALGTNSVADEANTVSVGSSTQQRRITNVAAGVNNTDAVNVAQLKASEAGSVRYETNADGSVNYSVLNLGDGSGGTTRIGNVSAAVNDTDAVNYAQLKRSVEEANTYTDQKMGEMNSKIKGVENKMSGGIASAMAMAGLPQAYAPGANMTSIAGGTFNGESAVAIGVSMVSESGGWVYKLQGTSNSQGDYSAAIGAGFQW</sequence>
<name>SADA_SALTY</name>
<comment type="function">
    <text evidence="3">Involved in cell aggregation, biofilm formation, and adhesion to human intestinal epithelial cells.</text>
</comment>
<comment type="subunit">
    <text evidence="3">Homotrimer.</text>
</comment>
<comment type="subcellular location">
    <subcellularLocation>
        <location evidence="3">Cell surface</location>
    </subcellularLocation>
    <subcellularLocation>
        <location evidence="3">Cell outer membrane</location>
    </subcellularLocation>
    <text evidence="1 5">The C-terminal translocator domain is localized in the outer membrane and the passenger domain is at the cell surface (By similarity). Proper surface expression requires SadB (PubMed:24369174).</text>
</comment>
<comment type="domain">
    <text evidence="1 4">The signal peptide, cleaved at the inner membrane, guides the autotransporter protein to the periplasmic space. Then, insertion of the C-terminal translocator domain in the outer membrane forms a hydrophilic pore for the translocation of the passenger domain to the bacterial cell surface (By similarity). The surface exposed region contains four YadA-like head domains and extended stalk regions, multiply segmented by FGG, HANS, DALL and neck motifs (PubMed:23213248).</text>
</comment>
<comment type="disruption phenotype">
    <text evidence="3">In vitro, loss of sadA does not affect cell aggregation, biofilm formation and adhesion to epithelial cells. Disruption does not affect the course of infection.</text>
</comment>
<comment type="miscellaneous">
    <text evidence="3">Immunization of mice with folded, full-length, purified SadA elicits an IgG response which provides limited protection against bacterial challenge.</text>
</comment>
<comment type="similarity">
    <text evidence="7">Belongs to the autotransporter-2 (AT-2) (TC 1.B.40) family.</text>
</comment>
<accession>Q8ZL64</accession>
<proteinExistence type="evidence at protein level"/>
<protein>
    <recommendedName>
        <fullName evidence="7">Autotransporter adhesin SadA</fullName>
    </recommendedName>
    <alternativeName>
        <fullName evidence="6">Salmonella adhesin A</fullName>
    </alternativeName>
    <alternativeName>
        <fullName evidence="7">Type 5 secretion system autotransporter SadA</fullName>
    </alternativeName>
</protein>
<reference key="1">
    <citation type="journal article" date="2001" name="Nature">
        <title>Complete genome sequence of Salmonella enterica serovar Typhimurium LT2.</title>
        <authorList>
            <person name="McClelland M."/>
            <person name="Sanderson K.E."/>
            <person name="Spieth J."/>
            <person name="Clifton S.W."/>
            <person name="Latreille P."/>
            <person name="Courtney L."/>
            <person name="Porwollik S."/>
            <person name="Ali J."/>
            <person name="Dante M."/>
            <person name="Du F."/>
            <person name="Hou S."/>
            <person name="Layman D."/>
            <person name="Leonard S."/>
            <person name="Nguyen C."/>
            <person name="Scott K."/>
            <person name="Holmes A."/>
            <person name="Grewal N."/>
            <person name="Mulvaney E."/>
            <person name="Ryan E."/>
            <person name="Sun H."/>
            <person name="Florea L."/>
            <person name="Miller W."/>
            <person name="Stoneking T."/>
            <person name="Nhan M."/>
            <person name="Waterston R."/>
            <person name="Wilson R.K."/>
        </authorList>
    </citation>
    <scope>NUCLEOTIDE SEQUENCE [LARGE SCALE GENOMIC DNA]</scope>
    <source>
        <strain>LT2 / SGSC1412 / ATCC 700720</strain>
    </source>
</reference>
<reference key="2">
    <citation type="journal article" date="2011" name="Infect. Immun.">
        <title>SadA, a trimeric autotransporter from Salmonella enterica serovar Typhimurium, can promote biofilm formation and provides limited protection against infection.</title>
        <authorList>
            <person name="Raghunathan D."/>
            <person name="Wells T.J."/>
            <person name="Morris F.C."/>
            <person name="Shaw R.K."/>
            <person name="Bobat S."/>
            <person name="Peters S.E."/>
            <person name="Paterson G.K."/>
            <person name="Jensen K.T."/>
            <person name="Leyton D.L."/>
            <person name="Blair J.M."/>
            <person name="Browning D.F."/>
            <person name="Pravin J."/>
            <person name="Flores-Langarica A."/>
            <person name="Hitchcock J.R."/>
            <person name="Moraes C.T."/>
            <person name="Piazza R.M."/>
            <person name="Maskell D.J."/>
            <person name="Webber M.A."/>
            <person name="May R.C."/>
            <person name="MacLennan C.A."/>
            <person name="Piddock L.J."/>
            <person name="Cunningham A.F."/>
            <person name="Henderson I.R."/>
        </authorList>
    </citation>
    <scope>FUNCTION</scope>
    <scope>SUBUNIT</scope>
    <scope>SUBCELLULAR LOCATION</scope>
    <scope>DISRUPTION PHENOTYPE</scope>
    <source>
        <strain>SL1344</strain>
    </source>
</reference>
<reference key="3">
    <citation type="journal article" date="2014" name="J. Biol. Chem.">
        <title>A trimeric lipoprotein assists in trimeric autotransporter biogenesis in enterobacteria.</title>
        <authorList>
            <person name="Grin I."/>
            <person name="Hartmann M.D."/>
            <person name="Sauer G."/>
            <person name="Hernandez Alvarez B."/>
            <person name="Schuetz M."/>
            <person name="Wagner S."/>
            <person name="Madlung J."/>
            <person name="Macek B."/>
            <person name="Felipe-Lopez A."/>
            <person name="Hensel M."/>
            <person name="Lupas A."/>
            <person name="Linke D."/>
        </authorList>
    </citation>
    <scope>SUBCELLULAR LOCATION</scope>
</reference>
<reference evidence="18" key="4">
    <citation type="journal article" date="2008" name="Protein Eng. Des. Sel.">
        <title>A new expression system for protein crystallization using trimeric coiled-coil adaptors.</title>
        <authorList>
            <person name="Hernandez Alvarez B."/>
            <person name="Hartmann M.D."/>
            <person name="Albrecht R."/>
            <person name="Lupas A.N."/>
            <person name="Zeth K."/>
            <person name="Linke D."/>
        </authorList>
    </citation>
    <scope>X-RAY CRYSTALLOGRAPHY (1.85 ANGSTROMS) OF 304-358</scope>
</reference>
<reference evidence="9 10 11" key="5">
    <citation type="journal article" date="2009" name="Proc. Natl. Acad. Sci. U.S.A.">
        <title>A coiled-coil motif that sequesters ions to the hydrophobic core.</title>
        <authorList>
            <person name="Hartmann M.D."/>
            <person name="Ridderbusch O."/>
            <person name="Zeth K."/>
            <person name="Albrecht R."/>
            <person name="Testa O."/>
            <person name="Woolfson D.N."/>
            <person name="Sauer G."/>
            <person name="Dunin-Horkawicz S."/>
            <person name="Lupas A.N."/>
            <person name="Alvarez B.H."/>
        </authorList>
    </citation>
    <scope>X-RAY CRYSTALLOGRAPHY (1.85 ANGSTROMS) OF 479-523</scope>
</reference>
<reference evidence="12 13 14 15 16 17" key="6">
    <citation type="journal article" date="2012" name="Proc. Natl. Acad. Sci. U.S.A.">
        <title>Complete fiber structures of complex trimeric autotransporter adhesins conserved in enterobacteria.</title>
        <authorList>
            <person name="Hartmann M.D."/>
            <person name="Grin I."/>
            <person name="Dunin-Horkawicz S."/>
            <person name="Deiss S."/>
            <person name="Linke D."/>
            <person name="Lupas A.N."/>
            <person name="Hernandez Alvarez B."/>
        </authorList>
    </citation>
    <scope>X-RAY CRYSTALLOGRAPHY (1.35 ANGSTROMS) OF 253-358; 823-947 AND 1049-1386</scope>
    <scope>DOMAIN</scope>
    <source>
        <strain>LT2</strain>
    </source>
</reference>
<feature type="signal peptide" evidence="7">
    <location>
        <begin position="1"/>
        <end position="54"/>
    </location>
</feature>
<feature type="chain" id="PRO_0000437739" description="Autotransporter adhesin SadA">
    <location>
        <begin position="55"/>
        <end position="1461"/>
    </location>
</feature>
<feature type="transmembrane region" description="Beta stranded" evidence="2">
    <location>
        <begin position="1407"/>
        <end position="1417"/>
    </location>
</feature>
<feature type="transmembrane region" description="Beta stranded" evidence="2">
    <location>
        <begin position="1421"/>
        <end position="1431"/>
    </location>
</feature>
<feature type="transmembrane region" description="Beta stranded" evidence="2">
    <location>
        <begin position="1440"/>
        <end position="1446"/>
    </location>
</feature>
<feature type="transmembrane region" description="Beta stranded" evidence="2">
    <location>
        <begin position="1450"/>
        <end position="1461"/>
    </location>
</feature>
<feature type="region of interest" description="Surface exposed passenger domain" evidence="7">
    <location>
        <begin position="55"/>
        <end position="1372"/>
    </location>
</feature>
<feature type="region of interest" description="Translocator domain" evidence="7">
    <location>
        <begin position="1373"/>
        <end position="1461"/>
    </location>
</feature>
<feature type="helix" evidence="20">
    <location>
        <begin position="254"/>
        <end position="265"/>
    </location>
</feature>
<feature type="strand" evidence="20">
    <location>
        <begin position="282"/>
        <end position="284"/>
    </location>
</feature>
<feature type="strand" evidence="20">
    <location>
        <begin position="287"/>
        <end position="291"/>
    </location>
</feature>
<feature type="helix" evidence="20">
    <location>
        <begin position="292"/>
        <end position="302"/>
    </location>
</feature>
<feature type="strand" evidence="24">
    <location>
        <begin position="319"/>
        <end position="321"/>
    </location>
</feature>
<feature type="turn" evidence="26">
    <location>
        <begin position="322"/>
        <end position="324"/>
    </location>
</feature>
<feature type="strand" evidence="26">
    <location>
        <begin position="325"/>
        <end position="328"/>
    </location>
</feature>
<feature type="helix" evidence="19">
    <location>
        <begin position="478"/>
        <end position="525"/>
    </location>
</feature>
<feature type="helix" evidence="21">
    <location>
        <begin position="823"/>
        <end position="849"/>
    </location>
</feature>
<feature type="strand" evidence="21">
    <location>
        <begin position="852"/>
        <end position="854"/>
    </location>
</feature>
<feature type="turn" evidence="21">
    <location>
        <begin position="855"/>
        <end position="858"/>
    </location>
</feature>
<feature type="strand" evidence="21">
    <location>
        <begin position="859"/>
        <end position="861"/>
    </location>
</feature>
<feature type="strand" evidence="21">
    <location>
        <begin position="872"/>
        <end position="875"/>
    </location>
</feature>
<feature type="helix" evidence="21">
    <location>
        <begin position="890"/>
        <end position="903"/>
    </location>
</feature>
<feature type="strand" evidence="23">
    <location>
        <begin position="1063"/>
        <end position="1065"/>
    </location>
</feature>
<feature type="strand" evidence="22">
    <location>
        <begin position="1081"/>
        <end position="1083"/>
    </location>
</feature>
<feature type="strand" evidence="22">
    <location>
        <begin position="1094"/>
        <end position="1099"/>
    </location>
</feature>
<feature type="strand" evidence="22">
    <location>
        <begin position="1110"/>
        <end position="1113"/>
    </location>
</feature>
<feature type="strand" evidence="22">
    <location>
        <begin position="1120"/>
        <end position="1122"/>
    </location>
</feature>
<feature type="strand" evidence="22">
    <location>
        <begin position="1124"/>
        <end position="1127"/>
    </location>
</feature>
<feature type="strand" evidence="22">
    <location>
        <begin position="1138"/>
        <end position="1140"/>
    </location>
</feature>
<feature type="strand" evidence="22">
    <location>
        <begin position="1155"/>
        <end position="1157"/>
    </location>
</feature>
<feature type="helix" evidence="25">
    <location>
        <begin position="1184"/>
        <end position="1217"/>
    </location>
</feature>
<feature type="helix" evidence="25">
    <location>
        <begin position="1219"/>
        <end position="1225"/>
    </location>
</feature>
<feature type="strand" evidence="25">
    <location>
        <begin position="1229"/>
        <end position="1234"/>
    </location>
</feature>
<feature type="strand" evidence="25">
    <location>
        <begin position="1248"/>
        <end position="1251"/>
    </location>
</feature>
<feature type="strand" evidence="25">
    <location>
        <begin position="1262"/>
        <end position="1265"/>
    </location>
</feature>
<feature type="strand" evidence="25">
    <location>
        <begin position="1275"/>
        <end position="1279"/>
    </location>
</feature>
<feature type="strand" evidence="25">
    <location>
        <begin position="1281"/>
        <end position="1283"/>
    </location>
</feature>
<feature type="strand" evidence="25">
    <location>
        <begin position="1285"/>
        <end position="1290"/>
    </location>
</feature>
<feature type="helix" evidence="25">
    <location>
        <begin position="1302"/>
        <end position="1309"/>
    </location>
</feature>
<feature type="strand" evidence="25">
    <location>
        <begin position="1327"/>
        <end position="1329"/>
    </location>
</feature>
<feature type="strand" evidence="25">
    <location>
        <begin position="1333"/>
        <end position="1335"/>
    </location>
</feature>
<feature type="strand" evidence="25">
    <location>
        <begin position="1338"/>
        <end position="1343"/>
    </location>
</feature>
<feature type="helix" evidence="25">
    <location>
        <begin position="1355"/>
        <end position="1387"/>
    </location>
</feature>